<reference evidence="5" key="1">
    <citation type="journal article" date="2005" name="Appl. Environ. Microbiol.">
        <title>Processive endoglucanase active in crystalline cellulose hydrolysis by the brown rot basidiomycete Gloeophyllum trabeum.</title>
        <authorList>
            <person name="Cohen R."/>
            <person name="Suzuki M.R."/>
            <person name="Hammel K.E."/>
        </authorList>
    </citation>
    <scope>PROTEIN SEQUENCE</scope>
    <scope>FUNCTION</scope>
    <scope>CATALYTIC ACTIVITY</scope>
    <scope>SUBCELLULAR LOCATION</scope>
    <source>
        <strain evidence="3">ATCC 11539 / Madison 617</strain>
    </source>
</reference>
<feature type="chain" id="PRO_0000184048" description="Endoglucanase Cel5A">
    <location>
        <begin position="1"/>
        <end position="56" status="greater than"/>
    </location>
</feature>
<feature type="active site" description="Nucleophile" evidence="1">
    <location>
        <position position="45"/>
    </location>
</feature>
<feature type="non-consecutive residues" evidence="4">
    <location>
        <begin position="18"/>
        <end position="19"/>
    </location>
</feature>
<feature type="non-consecutive residues" evidence="4">
    <location>
        <begin position="30"/>
        <end position="31"/>
    </location>
</feature>
<feature type="non-consecutive residues" evidence="4">
    <location>
        <begin position="39"/>
        <end position="40"/>
    </location>
</feature>
<feature type="non-terminal residue" evidence="4">
    <location>
        <position position="56"/>
    </location>
</feature>
<evidence type="ECO:0000250" key="1">
    <source>
        <dbReference type="UniProtKB" id="P07982"/>
    </source>
</evidence>
<evidence type="ECO:0000255" key="2"/>
<evidence type="ECO:0000269" key="3">
    <source>
    </source>
</evidence>
<evidence type="ECO:0000303" key="4">
    <source>
    </source>
</evidence>
<evidence type="ECO:0000305" key="5"/>
<organism>
    <name type="scientific">Gloeophyllum trabeum</name>
    <name type="common">Brown rot fungus</name>
    <name type="synonym">Agaricus trabeus</name>
    <dbReference type="NCBI Taxonomy" id="104355"/>
    <lineage>
        <taxon>Eukaryota</taxon>
        <taxon>Fungi</taxon>
        <taxon>Dikarya</taxon>
        <taxon>Basidiomycota</taxon>
        <taxon>Agaricomycotina</taxon>
        <taxon>Agaricomycetes</taxon>
        <taxon>Gloeophyllales</taxon>
        <taxon>Gloeophyllaceae</taxon>
        <taxon>Gloeophyllum</taxon>
    </lineage>
</organism>
<accession>P84194</accession>
<comment type="function">
    <text evidence="3">Has avicelase and carboxymethylcellulase activity.</text>
</comment>
<comment type="catalytic activity">
    <reaction evidence="3">
        <text>Endohydrolysis of (1-&gt;4)-beta-D-glucosidic linkages in cellulose, lichenin and cereal beta-D-glucans.</text>
        <dbReference type="EC" id="3.2.1.4"/>
    </reaction>
</comment>
<comment type="subcellular location">
    <subcellularLocation>
        <location evidence="3">Secreted</location>
        <location evidence="3">Extracellular space</location>
    </subcellularLocation>
</comment>
<comment type="similarity">
    <text evidence="2">Belongs to the glycosyl hydrolase 5 (cellulase A) family.</text>
</comment>
<sequence>VTGPAPLKFAGVNIAGFDYDALVQAXLNXGYLDSDNSGTLAINTETGGGNTASXVE</sequence>
<dbReference type="EC" id="3.2.1.4"/>
<dbReference type="CAZy" id="GH5">
    <property type="family name" value="Glycoside Hydrolase Family 5"/>
</dbReference>
<dbReference type="GO" id="GO:0005576">
    <property type="term" value="C:extracellular region"/>
    <property type="evidence" value="ECO:0000314"/>
    <property type="project" value="UniProtKB"/>
</dbReference>
<dbReference type="GO" id="GO:0008810">
    <property type="term" value="F:cellulase activity"/>
    <property type="evidence" value="ECO:0000314"/>
    <property type="project" value="UniProtKB"/>
</dbReference>
<dbReference type="GO" id="GO:0030245">
    <property type="term" value="P:cellulose catabolic process"/>
    <property type="evidence" value="ECO:0000314"/>
    <property type="project" value="UniProtKB"/>
</dbReference>
<protein>
    <recommendedName>
        <fullName>Endoglucanase Cel5A</fullName>
        <ecNumber>3.2.1.4</ecNumber>
    </recommendedName>
    <alternativeName>
        <fullName>Cellulase</fullName>
    </alternativeName>
    <alternativeName>
        <fullName>Endo-1,4-beta-glucanase</fullName>
    </alternativeName>
</protein>
<keyword id="KW-0119">Carbohydrate metabolism</keyword>
<keyword id="KW-0136">Cellulose degradation</keyword>
<keyword id="KW-0903">Direct protein sequencing</keyword>
<keyword id="KW-0326">Glycosidase</keyword>
<keyword id="KW-0378">Hydrolase</keyword>
<keyword id="KW-0624">Polysaccharide degradation</keyword>
<keyword id="KW-0964">Secreted</keyword>
<proteinExistence type="evidence at protein level"/>
<name>GUNA_GLOTR</name>